<comment type="function">
    <text evidence="1">One of the primary rRNA binding proteins. Required for association of the 30S and 50S subunits to form the 70S ribosome, for tRNA binding and peptide bond formation. It has been suggested to have peptidyltransferase activity; this is somewhat controversial. Makes several contacts with the 16S rRNA in the 70S ribosome.</text>
</comment>
<comment type="subunit">
    <text evidence="1">Part of the 50S ribosomal subunit. Forms a bridge to the 30S subunit in the 70S ribosome.</text>
</comment>
<comment type="similarity">
    <text evidence="1">Belongs to the universal ribosomal protein uL2 family.</text>
</comment>
<accession>Q1AU32</accession>
<proteinExistence type="inferred from homology"/>
<sequence>MPARRYKPTSPGRRNSSVLTRDSVTKEKPEKSLLAKLHKTGGRNVHGRITTRHKGGGHKRRYRIIDFKRNKDGVPATVAAIEYDPNRSANIALLHYHDGEKRYILAPRNLTVGSVVMSGPEAEVDVGNALPLANIPVGTTVHAVELEPGRGAQLARSAGTSAQIIAREGNLVTLRLPSGERRRVRAECRATVGVVGNQSHQNVRWGKAGRKRHLGIRPTVRGTVMNPVDHPHGGGEGKSTPGRAPVTPWGKITQGKPTRKKRKRSDAMIVARRKKGRRR</sequence>
<gene>
    <name evidence="1" type="primary">rplB</name>
    <name type="ordered locus">Rxyl_2152</name>
</gene>
<protein>
    <recommendedName>
        <fullName evidence="1">Large ribosomal subunit protein uL2</fullName>
    </recommendedName>
    <alternativeName>
        <fullName evidence="3">50S ribosomal protein L2</fullName>
    </alternativeName>
</protein>
<organism>
    <name type="scientific">Rubrobacter xylanophilus (strain DSM 9941 / JCM 11954 / NBRC 16129 / PRD-1)</name>
    <dbReference type="NCBI Taxonomy" id="266117"/>
    <lineage>
        <taxon>Bacteria</taxon>
        <taxon>Bacillati</taxon>
        <taxon>Actinomycetota</taxon>
        <taxon>Rubrobacteria</taxon>
        <taxon>Rubrobacterales</taxon>
        <taxon>Rubrobacteraceae</taxon>
        <taxon>Rubrobacter</taxon>
    </lineage>
</organism>
<evidence type="ECO:0000255" key="1">
    <source>
        <dbReference type="HAMAP-Rule" id="MF_01320"/>
    </source>
</evidence>
<evidence type="ECO:0000256" key="2">
    <source>
        <dbReference type="SAM" id="MobiDB-lite"/>
    </source>
</evidence>
<evidence type="ECO:0000305" key="3"/>
<reference key="1">
    <citation type="submission" date="2006-06" db="EMBL/GenBank/DDBJ databases">
        <title>Complete sequence of Rubrobacter xylanophilus DSM 9941.</title>
        <authorList>
            <consortium name="US DOE Joint Genome Institute"/>
            <person name="Copeland A."/>
            <person name="Lucas S."/>
            <person name="Lapidus A."/>
            <person name="Barry K."/>
            <person name="Detter J.C."/>
            <person name="Glavina del Rio T."/>
            <person name="Hammon N."/>
            <person name="Israni S."/>
            <person name="Dalin E."/>
            <person name="Tice H."/>
            <person name="Pitluck S."/>
            <person name="Munk A.C."/>
            <person name="Brettin T."/>
            <person name="Bruce D."/>
            <person name="Han C."/>
            <person name="Tapia R."/>
            <person name="Gilna P."/>
            <person name="Schmutz J."/>
            <person name="Larimer F."/>
            <person name="Land M."/>
            <person name="Hauser L."/>
            <person name="Kyrpides N."/>
            <person name="Lykidis A."/>
            <person name="da Costa M.S."/>
            <person name="Rainey F.A."/>
            <person name="Empadinhas N."/>
            <person name="Jolivet E."/>
            <person name="Battista J.R."/>
            <person name="Richardson P."/>
        </authorList>
    </citation>
    <scope>NUCLEOTIDE SEQUENCE [LARGE SCALE GENOMIC DNA]</scope>
    <source>
        <strain>DSM 9941 / JCM 11954 / NBRC 16129 / PRD-1</strain>
    </source>
</reference>
<keyword id="KW-1185">Reference proteome</keyword>
<keyword id="KW-0687">Ribonucleoprotein</keyword>
<keyword id="KW-0689">Ribosomal protein</keyword>
<keyword id="KW-0694">RNA-binding</keyword>
<keyword id="KW-0699">rRNA-binding</keyword>
<dbReference type="EMBL" id="CP000386">
    <property type="protein sequence ID" value="ABG05096.1"/>
    <property type="molecule type" value="Genomic_DNA"/>
</dbReference>
<dbReference type="RefSeq" id="WP_011565111.1">
    <property type="nucleotide sequence ID" value="NC_008148.1"/>
</dbReference>
<dbReference type="SMR" id="Q1AU32"/>
<dbReference type="STRING" id="266117.Rxyl_2152"/>
<dbReference type="KEGG" id="rxy:Rxyl_2152"/>
<dbReference type="eggNOG" id="COG0090">
    <property type="taxonomic scope" value="Bacteria"/>
</dbReference>
<dbReference type="HOGENOM" id="CLU_036235_2_1_11"/>
<dbReference type="OrthoDB" id="9778722at2"/>
<dbReference type="PhylomeDB" id="Q1AU32"/>
<dbReference type="Proteomes" id="UP000006637">
    <property type="component" value="Chromosome"/>
</dbReference>
<dbReference type="GO" id="GO:0015934">
    <property type="term" value="C:large ribosomal subunit"/>
    <property type="evidence" value="ECO:0007669"/>
    <property type="project" value="InterPro"/>
</dbReference>
<dbReference type="GO" id="GO:0019843">
    <property type="term" value="F:rRNA binding"/>
    <property type="evidence" value="ECO:0007669"/>
    <property type="project" value="UniProtKB-UniRule"/>
</dbReference>
<dbReference type="GO" id="GO:0003735">
    <property type="term" value="F:structural constituent of ribosome"/>
    <property type="evidence" value="ECO:0007669"/>
    <property type="project" value="InterPro"/>
</dbReference>
<dbReference type="GO" id="GO:0016740">
    <property type="term" value="F:transferase activity"/>
    <property type="evidence" value="ECO:0007669"/>
    <property type="project" value="InterPro"/>
</dbReference>
<dbReference type="GO" id="GO:0002181">
    <property type="term" value="P:cytoplasmic translation"/>
    <property type="evidence" value="ECO:0007669"/>
    <property type="project" value="TreeGrafter"/>
</dbReference>
<dbReference type="FunFam" id="2.30.30.30:FF:000001">
    <property type="entry name" value="50S ribosomal protein L2"/>
    <property type="match status" value="1"/>
</dbReference>
<dbReference type="FunFam" id="2.40.50.140:FF:000003">
    <property type="entry name" value="50S ribosomal protein L2"/>
    <property type="match status" value="1"/>
</dbReference>
<dbReference type="FunFam" id="4.10.950.10:FF:000001">
    <property type="entry name" value="50S ribosomal protein L2"/>
    <property type="match status" value="1"/>
</dbReference>
<dbReference type="Gene3D" id="2.30.30.30">
    <property type="match status" value="1"/>
</dbReference>
<dbReference type="Gene3D" id="2.40.50.140">
    <property type="entry name" value="Nucleic acid-binding proteins"/>
    <property type="match status" value="1"/>
</dbReference>
<dbReference type="Gene3D" id="4.10.950.10">
    <property type="entry name" value="Ribosomal protein L2, domain 3"/>
    <property type="match status" value="1"/>
</dbReference>
<dbReference type="HAMAP" id="MF_01320_B">
    <property type="entry name" value="Ribosomal_uL2_B"/>
    <property type="match status" value="1"/>
</dbReference>
<dbReference type="InterPro" id="IPR012340">
    <property type="entry name" value="NA-bd_OB-fold"/>
</dbReference>
<dbReference type="InterPro" id="IPR014722">
    <property type="entry name" value="Rib_uL2_dom2"/>
</dbReference>
<dbReference type="InterPro" id="IPR002171">
    <property type="entry name" value="Ribosomal_uL2"/>
</dbReference>
<dbReference type="InterPro" id="IPR005880">
    <property type="entry name" value="Ribosomal_uL2_bac/org-type"/>
</dbReference>
<dbReference type="InterPro" id="IPR022669">
    <property type="entry name" value="Ribosomal_uL2_C"/>
</dbReference>
<dbReference type="InterPro" id="IPR022671">
    <property type="entry name" value="Ribosomal_uL2_CS"/>
</dbReference>
<dbReference type="InterPro" id="IPR014726">
    <property type="entry name" value="Ribosomal_uL2_dom3"/>
</dbReference>
<dbReference type="InterPro" id="IPR022666">
    <property type="entry name" value="Ribosomal_uL2_RNA-bd_dom"/>
</dbReference>
<dbReference type="InterPro" id="IPR008991">
    <property type="entry name" value="Translation_prot_SH3-like_sf"/>
</dbReference>
<dbReference type="NCBIfam" id="TIGR01171">
    <property type="entry name" value="rplB_bact"/>
    <property type="match status" value="1"/>
</dbReference>
<dbReference type="PANTHER" id="PTHR13691:SF5">
    <property type="entry name" value="LARGE RIBOSOMAL SUBUNIT PROTEIN UL2M"/>
    <property type="match status" value="1"/>
</dbReference>
<dbReference type="PANTHER" id="PTHR13691">
    <property type="entry name" value="RIBOSOMAL PROTEIN L2"/>
    <property type="match status" value="1"/>
</dbReference>
<dbReference type="Pfam" id="PF00181">
    <property type="entry name" value="Ribosomal_L2"/>
    <property type="match status" value="1"/>
</dbReference>
<dbReference type="Pfam" id="PF03947">
    <property type="entry name" value="Ribosomal_L2_C"/>
    <property type="match status" value="1"/>
</dbReference>
<dbReference type="PIRSF" id="PIRSF002158">
    <property type="entry name" value="Ribosomal_L2"/>
    <property type="match status" value="1"/>
</dbReference>
<dbReference type="SMART" id="SM01383">
    <property type="entry name" value="Ribosomal_L2"/>
    <property type="match status" value="1"/>
</dbReference>
<dbReference type="SMART" id="SM01382">
    <property type="entry name" value="Ribosomal_L2_C"/>
    <property type="match status" value="1"/>
</dbReference>
<dbReference type="SUPFAM" id="SSF50249">
    <property type="entry name" value="Nucleic acid-binding proteins"/>
    <property type="match status" value="1"/>
</dbReference>
<dbReference type="SUPFAM" id="SSF50104">
    <property type="entry name" value="Translation proteins SH3-like domain"/>
    <property type="match status" value="1"/>
</dbReference>
<dbReference type="PROSITE" id="PS00467">
    <property type="entry name" value="RIBOSOMAL_L2"/>
    <property type="match status" value="1"/>
</dbReference>
<name>RL2_RUBXD</name>
<feature type="chain" id="PRO_0000310004" description="Large ribosomal subunit protein uL2">
    <location>
        <begin position="1"/>
        <end position="279"/>
    </location>
</feature>
<feature type="region of interest" description="Disordered" evidence="2">
    <location>
        <begin position="1"/>
        <end position="28"/>
    </location>
</feature>
<feature type="region of interest" description="Disordered" evidence="2">
    <location>
        <begin position="221"/>
        <end position="279"/>
    </location>
</feature>
<feature type="compositionally biased region" description="Polar residues" evidence="2">
    <location>
        <begin position="12"/>
        <end position="22"/>
    </location>
</feature>